<comment type="catalytic activity">
    <reaction evidence="1">
        <text>GTP + H2O = 7,8-dihydroneopterin 3'-triphosphate + formate + H(+)</text>
        <dbReference type="Rhea" id="RHEA:17473"/>
        <dbReference type="ChEBI" id="CHEBI:15377"/>
        <dbReference type="ChEBI" id="CHEBI:15378"/>
        <dbReference type="ChEBI" id="CHEBI:15740"/>
        <dbReference type="ChEBI" id="CHEBI:37565"/>
        <dbReference type="ChEBI" id="CHEBI:58462"/>
        <dbReference type="EC" id="3.5.4.16"/>
    </reaction>
</comment>
<comment type="pathway">
    <text evidence="1">Cofactor biosynthesis; 7,8-dihydroneopterin triphosphate biosynthesis; 7,8-dihydroneopterin triphosphate from GTP: step 1/1.</text>
</comment>
<comment type="subunit">
    <text evidence="1">Homomer.</text>
</comment>
<comment type="similarity">
    <text evidence="1">Belongs to the GTP cyclohydrolase I family.</text>
</comment>
<proteinExistence type="inferred from homology"/>
<keyword id="KW-0342">GTP-binding</keyword>
<keyword id="KW-0378">Hydrolase</keyword>
<keyword id="KW-0479">Metal-binding</keyword>
<keyword id="KW-0547">Nucleotide-binding</keyword>
<keyword id="KW-0554">One-carbon metabolism</keyword>
<keyword id="KW-0862">Zinc</keyword>
<gene>
    <name evidence="1" type="primary">folE</name>
    <name type="ordered locus">Bsph_1930</name>
</gene>
<feature type="chain" id="PRO_1000100182" description="GTP cyclohydrolase 1">
    <location>
        <begin position="1"/>
        <end position="189"/>
    </location>
</feature>
<feature type="binding site" evidence="1">
    <location>
        <position position="78"/>
    </location>
    <ligand>
        <name>Zn(2+)</name>
        <dbReference type="ChEBI" id="CHEBI:29105"/>
    </ligand>
</feature>
<feature type="binding site" evidence="1">
    <location>
        <position position="81"/>
    </location>
    <ligand>
        <name>Zn(2+)</name>
        <dbReference type="ChEBI" id="CHEBI:29105"/>
    </ligand>
</feature>
<feature type="binding site" evidence="1">
    <location>
        <position position="150"/>
    </location>
    <ligand>
        <name>Zn(2+)</name>
        <dbReference type="ChEBI" id="CHEBI:29105"/>
    </ligand>
</feature>
<name>GCH1_LYSSC</name>
<sequence length="189" mass="21404">MSNIDLLKIEEAVKMILEAVGEDVNREGLLDTPKRVAKMYAEMFSGLHEDAKDYFRTVFHEDHEELVLVKDIPFYSMCEHHLVPFYGKAHVAYIPNDGIVAGLSKLGRAVETIARRPQLQERITSSVADTIMEMLAPKGVYVVIEAEHMCMTMRGLKKPGSKTVTSVARGVYEEDEVKRREVLSFIQMS</sequence>
<protein>
    <recommendedName>
        <fullName evidence="1">GTP cyclohydrolase 1</fullName>
        <ecNumber evidence="1">3.5.4.16</ecNumber>
    </recommendedName>
    <alternativeName>
        <fullName evidence="1">GTP cyclohydrolase I</fullName>
        <shortName evidence="1">GTP-CH-I</shortName>
    </alternativeName>
</protein>
<accession>B1HTA3</accession>
<dbReference type="EC" id="3.5.4.16" evidence="1"/>
<dbReference type="EMBL" id="CP000817">
    <property type="protein sequence ID" value="ACA39519.1"/>
    <property type="molecule type" value="Genomic_DNA"/>
</dbReference>
<dbReference type="RefSeq" id="WP_012293615.1">
    <property type="nucleotide sequence ID" value="NC_010382.1"/>
</dbReference>
<dbReference type="SMR" id="B1HTA3"/>
<dbReference type="EnsemblBacteria" id="ACA39519">
    <property type="protein sequence ID" value="ACA39519"/>
    <property type="gene ID" value="Bsph_1930"/>
</dbReference>
<dbReference type="KEGG" id="lsp:Bsph_1930"/>
<dbReference type="HOGENOM" id="CLU_049768_3_3_9"/>
<dbReference type="UniPathway" id="UPA00848">
    <property type="reaction ID" value="UER00151"/>
</dbReference>
<dbReference type="Proteomes" id="UP000002164">
    <property type="component" value="Chromosome"/>
</dbReference>
<dbReference type="GO" id="GO:0005737">
    <property type="term" value="C:cytoplasm"/>
    <property type="evidence" value="ECO:0007669"/>
    <property type="project" value="TreeGrafter"/>
</dbReference>
<dbReference type="GO" id="GO:0005525">
    <property type="term" value="F:GTP binding"/>
    <property type="evidence" value="ECO:0007669"/>
    <property type="project" value="UniProtKB-KW"/>
</dbReference>
<dbReference type="GO" id="GO:0003934">
    <property type="term" value="F:GTP cyclohydrolase I activity"/>
    <property type="evidence" value="ECO:0007669"/>
    <property type="project" value="UniProtKB-UniRule"/>
</dbReference>
<dbReference type="GO" id="GO:0008270">
    <property type="term" value="F:zinc ion binding"/>
    <property type="evidence" value="ECO:0007669"/>
    <property type="project" value="UniProtKB-UniRule"/>
</dbReference>
<dbReference type="GO" id="GO:0006730">
    <property type="term" value="P:one-carbon metabolic process"/>
    <property type="evidence" value="ECO:0007669"/>
    <property type="project" value="UniProtKB-UniRule"/>
</dbReference>
<dbReference type="GO" id="GO:0006729">
    <property type="term" value="P:tetrahydrobiopterin biosynthetic process"/>
    <property type="evidence" value="ECO:0007669"/>
    <property type="project" value="TreeGrafter"/>
</dbReference>
<dbReference type="GO" id="GO:0046654">
    <property type="term" value="P:tetrahydrofolate biosynthetic process"/>
    <property type="evidence" value="ECO:0007669"/>
    <property type="project" value="UniProtKB-UniRule"/>
</dbReference>
<dbReference type="FunFam" id="1.10.286.10:FF:000001">
    <property type="entry name" value="GTP cyclohydrolase 1"/>
    <property type="match status" value="1"/>
</dbReference>
<dbReference type="FunFam" id="3.30.1130.10:FF:000001">
    <property type="entry name" value="GTP cyclohydrolase 1"/>
    <property type="match status" value="1"/>
</dbReference>
<dbReference type="Gene3D" id="1.10.286.10">
    <property type="match status" value="1"/>
</dbReference>
<dbReference type="Gene3D" id="3.30.1130.10">
    <property type="match status" value="1"/>
</dbReference>
<dbReference type="HAMAP" id="MF_00223">
    <property type="entry name" value="FolE"/>
    <property type="match status" value="1"/>
</dbReference>
<dbReference type="InterPro" id="IPR043133">
    <property type="entry name" value="GTP-CH-I_C/QueF"/>
</dbReference>
<dbReference type="InterPro" id="IPR043134">
    <property type="entry name" value="GTP-CH-I_N"/>
</dbReference>
<dbReference type="InterPro" id="IPR001474">
    <property type="entry name" value="GTP_CycHdrlase_I"/>
</dbReference>
<dbReference type="InterPro" id="IPR018234">
    <property type="entry name" value="GTP_CycHdrlase_I_CS"/>
</dbReference>
<dbReference type="InterPro" id="IPR020602">
    <property type="entry name" value="GTP_CycHdrlase_I_dom"/>
</dbReference>
<dbReference type="NCBIfam" id="TIGR00063">
    <property type="entry name" value="folE"/>
    <property type="match status" value="1"/>
</dbReference>
<dbReference type="NCBIfam" id="NF006825">
    <property type="entry name" value="PRK09347.1-2"/>
    <property type="match status" value="1"/>
</dbReference>
<dbReference type="NCBIfam" id="NF006826">
    <property type="entry name" value="PRK09347.1-3"/>
    <property type="match status" value="1"/>
</dbReference>
<dbReference type="PANTHER" id="PTHR11109:SF7">
    <property type="entry name" value="GTP CYCLOHYDROLASE 1"/>
    <property type="match status" value="1"/>
</dbReference>
<dbReference type="PANTHER" id="PTHR11109">
    <property type="entry name" value="GTP CYCLOHYDROLASE I"/>
    <property type="match status" value="1"/>
</dbReference>
<dbReference type="Pfam" id="PF01227">
    <property type="entry name" value="GTP_cyclohydroI"/>
    <property type="match status" value="1"/>
</dbReference>
<dbReference type="SUPFAM" id="SSF55620">
    <property type="entry name" value="Tetrahydrobiopterin biosynthesis enzymes-like"/>
    <property type="match status" value="1"/>
</dbReference>
<dbReference type="PROSITE" id="PS00859">
    <property type="entry name" value="GTP_CYCLOHYDROL_1_1"/>
    <property type="match status" value="1"/>
</dbReference>
<dbReference type="PROSITE" id="PS00860">
    <property type="entry name" value="GTP_CYCLOHYDROL_1_2"/>
    <property type="match status" value="1"/>
</dbReference>
<organism>
    <name type="scientific">Lysinibacillus sphaericus (strain C3-41)</name>
    <dbReference type="NCBI Taxonomy" id="444177"/>
    <lineage>
        <taxon>Bacteria</taxon>
        <taxon>Bacillati</taxon>
        <taxon>Bacillota</taxon>
        <taxon>Bacilli</taxon>
        <taxon>Bacillales</taxon>
        <taxon>Bacillaceae</taxon>
        <taxon>Lysinibacillus</taxon>
    </lineage>
</organism>
<reference key="1">
    <citation type="journal article" date="2008" name="J. Bacteriol.">
        <title>Complete genome sequence of the mosquitocidal bacterium Bacillus sphaericus C3-41 and comparison with those of closely related Bacillus species.</title>
        <authorList>
            <person name="Hu X."/>
            <person name="Fan W."/>
            <person name="Han B."/>
            <person name="Liu H."/>
            <person name="Zheng D."/>
            <person name="Li Q."/>
            <person name="Dong W."/>
            <person name="Yan J."/>
            <person name="Gao M."/>
            <person name="Berry C."/>
            <person name="Yuan Z."/>
        </authorList>
    </citation>
    <scope>NUCLEOTIDE SEQUENCE [LARGE SCALE GENOMIC DNA]</scope>
    <source>
        <strain>C3-41</strain>
    </source>
</reference>
<evidence type="ECO:0000255" key="1">
    <source>
        <dbReference type="HAMAP-Rule" id="MF_00223"/>
    </source>
</evidence>